<dbReference type="EC" id="2.1.1.223" evidence="1"/>
<dbReference type="EMBL" id="CP000569">
    <property type="protein sequence ID" value="ABN74980.1"/>
    <property type="molecule type" value="Genomic_DNA"/>
</dbReference>
<dbReference type="RefSeq" id="WP_011848674.1">
    <property type="nucleotide sequence ID" value="NC_009053.1"/>
</dbReference>
<dbReference type="SMR" id="A3N3J4"/>
<dbReference type="STRING" id="416269.APL_1900"/>
<dbReference type="EnsemblBacteria" id="ABN74980">
    <property type="protein sequence ID" value="ABN74980"/>
    <property type="gene ID" value="APL_1900"/>
</dbReference>
<dbReference type="KEGG" id="apl:APL_1900"/>
<dbReference type="PATRIC" id="fig|416269.6.peg.1979"/>
<dbReference type="eggNOG" id="COG4123">
    <property type="taxonomic scope" value="Bacteria"/>
</dbReference>
<dbReference type="HOGENOM" id="CLU_061983_0_0_6"/>
<dbReference type="Proteomes" id="UP000001432">
    <property type="component" value="Chromosome"/>
</dbReference>
<dbReference type="GO" id="GO:0005737">
    <property type="term" value="C:cytoplasm"/>
    <property type="evidence" value="ECO:0007669"/>
    <property type="project" value="UniProtKB-SubCell"/>
</dbReference>
<dbReference type="GO" id="GO:0003676">
    <property type="term" value="F:nucleic acid binding"/>
    <property type="evidence" value="ECO:0007669"/>
    <property type="project" value="InterPro"/>
</dbReference>
<dbReference type="GO" id="GO:0016430">
    <property type="term" value="F:tRNA (adenine-N6)-methyltransferase activity"/>
    <property type="evidence" value="ECO:0007669"/>
    <property type="project" value="UniProtKB-UniRule"/>
</dbReference>
<dbReference type="GO" id="GO:0032259">
    <property type="term" value="P:methylation"/>
    <property type="evidence" value="ECO:0007669"/>
    <property type="project" value="UniProtKB-KW"/>
</dbReference>
<dbReference type="GO" id="GO:0008033">
    <property type="term" value="P:tRNA processing"/>
    <property type="evidence" value="ECO:0007669"/>
    <property type="project" value="UniProtKB-UniRule"/>
</dbReference>
<dbReference type="CDD" id="cd02440">
    <property type="entry name" value="AdoMet_MTases"/>
    <property type="match status" value="1"/>
</dbReference>
<dbReference type="Gene3D" id="3.40.50.150">
    <property type="entry name" value="Vaccinia Virus protein VP39"/>
    <property type="match status" value="1"/>
</dbReference>
<dbReference type="HAMAP" id="MF_01872">
    <property type="entry name" value="tRNA_methyltr_YfiC"/>
    <property type="match status" value="1"/>
</dbReference>
<dbReference type="InterPro" id="IPR002052">
    <property type="entry name" value="DNA_methylase_N6_adenine_CS"/>
</dbReference>
<dbReference type="InterPro" id="IPR029063">
    <property type="entry name" value="SAM-dependent_MTases_sf"/>
</dbReference>
<dbReference type="InterPro" id="IPR007848">
    <property type="entry name" value="Small_mtfrase_dom"/>
</dbReference>
<dbReference type="InterPro" id="IPR050210">
    <property type="entry name" value="tRNA_Adenine-N(6)_MTase"/>
</dbReference>
<dbReference type="InterPro" id="IPR022882">
    <property type="entry name" value="tRNA_adenine-N6_MeTrfase"/>
</dbReference>
<dbReference type="PANTHER" id="PTHR47739">
    <property type="entry name" value="TRNA1(VAL) (ADENINE(37)-N6)-METHYLTRANSFERASE"/>
    <property type="match status" value="1"/>
</dbReference>
<dbReference type="PANTHER" id="PTHR47739:SF1">
    <property type="entry name" value="TRNA1(VAL) (ADENINE(37)-N6)-METHYLTRANSFERASE"/>
    <property type="match status" value="1"/>
</dbReference>
<dbReference type="Pfam" id="PF05175">
    <property type="entry name" value="MTS"/>
    <property type="match status" value="1"/>
</dbReference>
<dbReference type="PRINTS" id="PR00507">
    <property type="entry name" value="N12N6MTFRASE"/>
</dbReference>
<dbReference type="SUPFAM" id="SSF53335">
    <property type="entry name" value="S-adenosyl-L-methionine-dependent methyltransferases"/>
    <property type="match status" value="1"/>
</dbReference>
<dbReference type="PROSITE" id="PS00092">
    <property type="entry name" value="N6_MTASE"/>
    <property type="match status" value="1"/>
</dbReference>
<protein>
    <recommendedName>
        <fullName evidence="1">tRNA1(Val) (adenine(37)-N6)-methyltransferase</fullName>
        <ecNumber evidence="1">2.1.1.223</ecNumber>
    </recommendedName>
    <alternativeName>
        <fullName evidence="1">tRNA m6A37 methyltransferase</fullName>
    </alternativeName>
</protein>
<comment type="function">
    <text evidence="1">Specifically methylates the adenine in position 37 of tRNA(1)(Val) (anticodon cmo5UAC).</text>
</comment>
<comment type="catalytic activity">
    <reaction evidence="1">
        <text>adenosine(37) in tRNA1(Val) + S-adenosyl-L-methionine = N(6)-methyladenosine(37) in tRNA1(Val) + S-adenosyl-L-homocysteine + H(+)</text>
        <dbReference type="Rhea" id="RHEA:43160"/>
        <dbReference type="Rhea" id="RHEA-COMP:10369"/>
        <dbReference type="Rhea" id="RHEA-COMP:10370"/>
        <dbReference type="ChEBI" id="CHEBI:15378"/>
        <dbReference type="ChEBI" id="CHEBI:57856"/>
        <dbReference type="ChEBI" id="CHEBI:59789"/>
        <dbReference type="ChEBI" id="CHEBI:74411"/>
        <dbReference type="ChEBI" id="CHEBI:74449"/>
        <dbReference type="EC" id="2.1.1.223"/>
    </reaction>
</comment>
<comment type="subcellular location">
    <subcellularLocation>
        <location evidence="1">Cytoplasm</location>
    </subcellularLocation>
</comment>
<comment type="similarity">
    <text evidence="1">Belongs to the methyltransferase superfamily. tRNA (adenine-N(6)-)-methyltransferase family.</text>
</comment>
<evidence type="ECO:0000255" key="1">
    <source>
        <dbReference type="HAMAP-Rule" id="MF_01872"/>
    </source>
</evidence>
<name>TRMN6_ACTP2</name>
<keyword id="KW-0963">Cytoplasm</keyword>
<keyword id="KW-0489">Methyltransferase</keyword>
<keyword id="KW-1185">Reference proteome</keyword>
<keyword id="KW-0949">S-adenosyl-L-methionine</keyword>
<keyword id="KW-0808">Transferase</keyword>
<keyword id="KW-0819">tRNA processing</keyword>
<sequence length="236" mass="26906">MTKSQGFQFKQFFIAHDKCAMKVNTDGILLGAIADIRHKRQILDLGTGTGLVAIMLAQRTDENTQISALELEPNAYRQAVENCRNSAFSDRLQVYQGDVLDYHFHQKFDLIVSNPPYFSESLASRSYERDLARAATQSHLDWLLQAKKWLAEQGEISFILPFEAAEKLVEQSRTSCLFCTKICKIITKQGQAAKRMIVSFSAQNVPLEEQELVIYDADNQYTEAFKQLTKAFYLNM</sequence>
<gene>
    <name type="ordered locus">APL_1900</name>
</gene>
<feature type="chain" id="PRO_0000387333" description="tRNA1(Val) (adenine(37)-N6)-methyltransferase">
    <location>
        <begin position="1"/>
        <end position="236"/>
    </location>
</feature>
<proteinExistence type="inferred from homology"/>
<organism>
    <name type="scientific">Actinobacillus pleuropneumoniae serotype 5b (strain L20)</name>
    <dbReference type="NCBI Taxonomy" id="416269"/>
    <lineage>
        <taxon>Bacteria</taxon>
        <taxon>Pseudomonadati</taxon>
        <taxon>Pseudomonadota</taxon>
        <taxon>Gammaproteobacteria</taxon>
        <taxon>Pasteurellales</taxon>
        <taxon>Pasteurellaceae</taxon>
        <taxon>Actinobacillus</taxon>
    </lineage>
</organism>
<reference key="1">
    <citation type="journal article" date="2008" name="J. Bacteriol.">
        <title>The complete genome sequence of Actinobacillus pleuropneumoniae L20 (serotype 5b).</title>
        <authorList>
            <person name="Foote S.J."/>
            <person name="Bosse J.T."/>
            <person name="Bouevitch A.B."/>
            <person name="Langford P.R."/>
            <person name="Young N.M."/>
            <person name="Nash J.H.E."/>
        </authorList>
    </citation>
    <scope>NUCLEOTIDE SEQUENCE [LARGE SCALE GENOMIC DNA]</scope>
    <source>
        <strain>L20</strain>
    </source>
</reference>
<accession>A3N3J4</accession>